<proteinExistence type="inferred from homology"/>
<reference key="1">
    <citation type="journal article" date="2010" name="Genome Biol.">
        <title>Structure and dynamics of the pan-genome of Streptococcus pneumoniae and closely related species.</title>
        <authorList>
            <person name="Donati C."/>
            <person name="Hiller N.L."/>
            <person name="Tettelin H."/>
            <person name="Muzzi A."/>
            <person name="Croucher N.J."/>
            <person name="Angiuoli S.V."/>
            <person name="Oggioni M."/>
            <person name="Dunning Hotopp J.C."/>
            <person name="Hu F.Z."/>
            <person name="Riley D.R."/>
            <person name="Covacci A."/>
            <person name="Mitchell T.J."/>
            <person name="Bentley S.D."/>
            <person name="Kilian M."/>
            <person name="Ehrlich G.D."/>
            <person name="Rappuoli R."/>
            <person name="Moxon E.R."/>
            <person name="Masignani V."/>
        </authorList>
    </citation>
    <scope>NUCLEOTIDE SEQUENCE [LARGE SCALE GENOMIC DNA]</scope>
    <source>
        <strain>JJA</strain>
    </source>
</reference>
<feature type="chain" id="PRO_1000146701" description="Aspartate--ammonia ligase">
    <location>
        <begin position="1"/>
        <end position="330"/>
    </location>
</feature>
<comment type="catalytic activity">
    <reaction evidence="1">
        <text>L-aspartate + NH4(+) + ATP = L-asparagine + AMP + diphosphate + H(+)</text>
        <dbReference type="Rhea" id="RHEA:11372"/>
        <dbReference type="ChEBI" id="CHEBI:15378"/>
        <dbReference type="ChEBI" id="CHEBI:28938"/>
        <dbReference type="ChEBI" id="CHEBI:29991"/>
        <dbReference type="ChEBI" id="CHEBI:30616"/>
        <dbReference type="ChEBI" id="CHEBI:33019"/>
        <dbReference type="ChEBI" id="CHEBI:58048"/>
        <dbReference type="ChEBI" id="CHEBI:456215"/>
        <dbReference type="EC" id="6.3.1.1"/>
    </reaction>
</comment>
<comment type="pathway">
    <text evidence="1">Amino-acid biosynthesis; L-asparagine biosynthesis; L-asparagine from L-aspartate (ammonia route): step 1/1.</text>
</comment>
<comment type="subcellular location">
    <subcellularLocation>
        <location evidence="1">Cytoplasm</location>
    </subcellularLocation>
</comment>
<comment type="similarity">
    <text evidence="1">Belongs to the class-II aminoacyl-tRNA synthetase family. AsnA subfamily.</text>
</comment>
<organism>
    <name type="scientific">Streptococcus pneumoniae (strain JJA)</name>
    <dbReference type="NCBI Taxonomy" id="488222"/>
    <lineage>
        <taxon>Bacteria</taxon>
        <taxon>Bacillati</taxon>
        <taxon>Bacillota</taxon>
        <taxon>Bacilli</taxon>
        <taxon>Lactobacillales</taxon>
        <taxon>Streptococcaceae</taxon>
        <taxon>Streptococcus</taxon>
    </lineage>
</organism>
<dbReference type="EC" id="6.3.1.1" evidence="1"/>
<dbReference type="EMBL" id="CP000919">
    <property type="protein sequence ID" value="ACO19568.1"/>
    <property type="molecule type" value="Genomic_DNA"/>
</dbReference>
<dbReference type="RefSeq" id="WP_000747993.1">
    <property type="nucleotide sequence ID" value="NC_012466.1"/>
</dbReference>
<dbReference type="SMR" id="C1CGQ3"/>
<dbReference type="GeneID" id="45652817"/>
<dbReference type="KEGG" id="sjj:SPJ_1964"/>
<dbReference type="HOGENOM" id="CLU_071543_0_0_9"/>
<dbReference type="UniPathway" id="UPA00134">
    <property type="reaction ID" value="UER00194"/>
</dbReference>
<dbReference type="Proteomes" id="UP000002206">
    <property type="component" value="Chromosome"/>
</dbReference>
<dbReference type="GO" id="GO:0005829">
    <property type="term" value="C:cytosol"/>
    <property type="evidence" value="ECO:0007669"/>
    <property type="project" value="TreeGrafter"/>
</dbReference>
<dbReference type="GO" id="GO:0004071">
    <property type="term" value="F:aspartate-ammonia ligase activity"/>
    <property type="evidence" value="ECO:0007669"/>
    <property type="project" value="UniProtKB-UniRule"/>
</dbReference>
<dbReference type="GO" id="GO:0005524">
    <property type="term" value="F:ATP binding"/>
    <property type="evidence" value="ECO:0007669"/>
    <property type="project" value="UniProtKB-UniRule"/>
</dbReference>
<dbReference type="GO" id="GO:0140096">
    <property type="term" value="F:catalytic activity, acting on a protein"/>
    <property type="evidence" value="ECO:0007669"/>
    <property type="project" value="UniProtKB-ARBA"/>
</dbReference>
<dbReference type="GO" id="GO:0016740">
    <property type="term" value="F:transferase activity"/>
    <property type="evidence" value="ECO:0007669"/>
    <property type="project" value="UniProtKB-ARBA"/>
</dbReference>
<dbReference type="GO" id="GO:0070981">
    <property type="term" value="P:L-asparagine biosynthetic process"/>
    <property type="evidence" value="ECO:0007669"/>
    <property type="project" value="UniProtKB-UniRule"/>
</dbReference>
<dbReference type="CDD" id="cd00645">
    <property type="entry name" value="AsnA"/>
    <property type="match status" value="1"/>
</dbReference>
<dbReference type="Gene3D" id="3.30.930.10">
    <property type="entry name" value="Bira Bifunctional Protein, Domain 2"/>
    <property type="match status" value="1"/>
</dbReference>
<dbReference type="HAMAP" id="MF_00555">
    <property type="entry name" value="AsnA"/>
    <property type="match status" value="1"/>
</dbReference>
<dbReference type="InterPro" id="IPR006195">
    <property type="entry name" value="aa-tRNA-synth_II"/>
</dbReference>
<dbReference type="InterPro" id="IPR045864">
    <property type="entry name" value="aa-tRNA-synth_II/BPL/LPL"/>
</dbReference>
<dbReference type="InterPro" id="IPR004618">
    <property type="entry name" value="AsnA"/>
</dbReference>
<dbReference type="NCBIfam" id="TIGR00669">
    <property type="entry name" value="asnA"/>
    <property type="match status" value="1"/>
</dbReference>
<dbReference type="PANTHER" id="PTHR30073">
    <property type="entry name" value="ASPARTATE--AMMONIA LIGASE"/>
    <property type="match status" value="1"/>
</dbReference>
<dbReference type="PANTHER" id="PTHR30073:SF5">
    <property type="entry name" value="ASPARTATE--AMMONIA LIGASE"/>
    <property type="match status" value="1"/>
</dbReference>
<dbReference type="Pfam" id="PF03590">
    <property type="entry name" value="AsnA"/>
    <property type="match status" value="1"/>
</dbReference>
<dbReference type="PIRSF" id="PIRSF001555">
    <property type="entry name" value="Asp_ammon_ligase"/>
    <property type="match status" value="1"/>
</dbReference>
<dbReference type="SUPFAM" id="SSF55681">
    <property type="entry name" value="Class II aaRS and biotin synthetases"/>
    <property type="match status" value="1"/>
</dbReference>
<dbReference type="PROSITE" id="PS50862">
    <property type="entry name" value="AA_TRNA_LIGASE_II"/>
    <property type="match status" value="1"/>
</dbReference>
<gene>
    <name evidence="1" type="primary">asnA</name>
    <name type="ordered locus">SPJ_1964</name>
</gene>
<evidence type="ECO:0000255" key="1">
    <source>
        <dbReference type="HAMAP-Rule" id="MF_00555"/>
    </source>
</evidence>
<sequence length="330" mass="37618">MKKSFIHQQEEISFVKNTFTQYLKDKLEVVEVQGPILSKVGDGMQDNLSGVENPVSVKVLQIPDATYEVVHSLAKWKRHTLARFGFGEGEGLFVHMKALRPDEDSLDATHSVYVDQWDWEKVIPNGKRNIVYLKETVEKIYKAIRLTELAVEARYDIESILPKQITFIHTEELVERYPDLTPKERENAICKEFGAVFLIGIGGELPDGKPHDGRAPDYDDWTSESENGYKGLNGDILVWNESLGGAFELSSMGIRVDEETLRRQVEITGDEDRLELEWHKSLLNGLFPLTIGGGIGQSRMAMFLLRKRHIGEVQTSVWPQEVRDTYENIL</sequence>
<accession>C1CGQ3</accession>
<name>ASNA_STRZJ</name>
<protein>
    <recommendedName>
        <fullName evidence="1">Aspartate--ammonia ligase</fullName>
        <ecNumber evidence="1">6.3.1.1</ecNumber>
    </recommendedName>
    <alternativeName>
        <fullName evidence="1">Asparagine synthetase A</fullName>
    </alternativeName>
</protein>
<keyword id="KW-0028">Amino-acid biosynthesis</keyword>
<keyword id="KW-0061">Asparagine biosynthesis</keyword>
<keyword id="KW-0067">ATP-binding</keyword>
<keyword id="KW-0963">Cytoplasm</keyword>
<keyword id="KW-0436">Ligase</keyword>
<keyword id="KW-0547">Nucleotide-binding</keyword>